<proteinExistence type="evidence at protein level"/>
<keyword id="KW-1064">Adaptive immunity</keyword>
<keyword id="KW-1003">Cell membrane</keyword>
<keyword id="KW-1015">Disulfide bond</keyword>
<keyword id="KW-0297">G-protein coupled receptor</keyword>
<keyword id="KW-0391">Immunity</keyword>
<keyword id="KW-0395">Inflammatory response</keyword>
<keyword id="KW-0399">Innate immunity</keyword>
<keyword id="KW-0472">Membrane</keyword>
<keyword id="KW-0597">Phosphoprotein</keyword>
<keyword id="KW-0675">Receptor</keyword>
<keyword id="KW-1185">Reference proteome</keyword>
<keyword id="KW-0807">Transducer</keyword>
<keyword id="KW-0812">Transmembrane</keyword>
<keyword id="KW-1133">Transmembrane helix</keyword>
<gene>
    <name evidence="1" type="primary">Cx3cr1</name>
    <name evidence="6" type="synonym">Rbs11</name>
</gene>
<accession>P35411</accession>
<sequence length="354" mass="40327">MPTSFPELDLENFEYDDSAEACYLGDIVAFGTIFLSIFYSLVFTFGLVGNLLVVLALTNSRKSKSITDIYLLNLALSDLLFVATLPFWTHYLISHEGLHNAMCKLTTAFFFIGFFGGIFFITVISIDRYLAIVLAANSMNNRTVQHGVTISLGVWAAAILVASPQFMFTKRKDNECLGDYPEVLQEIWPVLRNSEVNILGFVLPLLIMSFCYFRIVRTLFSCKNRKKARAIRLILLVVVVFFLFWTPYNIVIFLETLKFYNFFPSCGMKRDLRWALSVTETVAFSHCCLNPFIYAFAGEKFRRYLRHLYNKCLAVLCGRPVHAGFSTESQRSRQDSILSSLTHYTSEGEGSLLL</sequence>
<comment type="function">
    <text evidence="1 2">Receptor for the C-X3-C chemokine fractalkine (CX3CL1) present on many early leukocyte cells; CX3CR1-CX3CL1 signaling exerts distinct functions in different tissue compartments, such as immune response, inflammation, cell adhesion and chemotaxis. CX3CR1-CX3CL1 signaling mediates cell migratory functions. Responsible for the recruitment of natural killer (NK) cells to inflamed tissues. Acts as a regulator of inflammation process leading to atherogenesis by mediating macrophage and monocyte recruitment to inflamed atherosclerotic plaques, promoting cell survival. Involved in airway inflammation by promoting interleukin 2-producing T helper (Th2) cell survival in inflamed lung. Involved in the migration of circulating monocytes to non-inflamed tissues, where they differentiate into macrophages and dendritic cells. Acts as a negative regulator of angiogenesis, probably by promoting macrophage chemotaxis. Plays a key role in brain microglia by regulating inflammatory response in the central nervous system (CNS) and regulating synapse maturation. Required to restrain the microglial inflammatory response in the CNS and the resulting parenchymal damage in response to pathological stimuli. Involved in brain development by participating in synaptic pruning, a natural process during which brain microglia eliminates extra synapses during postnatal development. Synaptic pruning by microglia is required to promote the maturation of circuit connectivity during brain development. Acts as an important regulator of the gut microbiota by controlling immunity to intestinal bacteria and fungi. Expressed in lamina propria dendritic cells in the small intestine, which form transepithelial dendrites capable of taking up bacteria in order to provide defense against pathogenic bacteria. Required to initiate innate and adaptive immune responses against dissemination of commensal fungi (mycobiota) component of the gut: expressed in mononuclear phagocytes (MNPs) and acts by promoting induction of antifungal IgG antibodies response to confer protection against disseminated C.albicans or C.auris infection (By similarity). Also acts as a receptor for C-C motif chemokine CCL26, inducing cell chemotaxis (By similarity).</text>
</comment>
<comment type="subunit">
    <text evidence="1">Found in a ternary complex with CX3CL1 and ITGAV:ITGB3 or ITGA4:ITGB1.</text>
</comment>
<comment type="subcellular location">
    <subcellularLocation>
        <location evidence="1">Cell membrane</location>
        <topology evidence="3">Multi-pass membrane protein</topology>
    </subcellularLocation>
</comment>
<comment type="tissue specificity">
    <text evidence="5">Most abundant in adult spinal cord, brain, kidney, gut, uterus and testes.</text>
</comment>
<comment type="PTM">
    <text evidence="5">This protein is not N-glycosylated which is unusual for G-protein-coupled receptors.</text>
</comment>
<comment type="similarity">
    <text evidence="4">Belongs to the G-protein coupled receptor 1 family.</text>
</comment>
<reference key="1">
    <citation type="journal article" date="1994" name="Neurosci. Lett.">
        <title>cDNA cloning of a G-protein-coupled receptor expressed in rat spinal cord and brain related to chemokine receptors.</title>
        <authorList>
            <person name="Harrison J.K."/>
            <person name="Barber C.M."/>
            <person name="Lynch K.R."/>
        </authorList>
    </citation>
    <scope>NUCLEOTIDE SEQUENCE [MRNA]</scope>
    <scope>TISSUE SPECIFICITY</scope>
    <scope>ABSENCE OF GLYCOSYLATION</scope>
    <source>
        <strain>Sprague-Dawley</strain>
        <tissue>Spinal cord</tissue>
    </source>
</reference>
<name>CX3C1_RAT</name>
<evidence type="ECO:0000250" key="1">
    <source>
        <dbReference type="UniProtKB" id="P49238"/>
    </source>
</evidence>
<evidence type="ECO:0000250" key="2">
    <source>
        <dbReference type="UniProtKB" id="Q9Z0D9"/>
    </source>
</evidence>
<evidence type="ECO:0000255" key="3"/>
<evidence type="ECO:0000255" key="4">
    <source>
        <dbReference type="PROSITE-ProRule" id="PRU00521"/>
    </source>
</evidence>
<evidence type="ECO:0000269" key="5">
    <source>
    </source>
</evidence>
<evidence type="ECO:0000303" key="6">
    <source>
    </source>
</evidence>
<feature type="chain" id="PRO_0000069328" description="CX3C chemokine receptor 1">
    <location>
        <begin position="1"/>
        <end position="354"/>
    </location>
</feature>
<feature type="topological domain" description="Extracellular" evidence="3">
    <location>
        <begin position="1"/>
        <end position="32"/>
    </location>
</feature>
<feature type="transmembrane region" description="Helical; Name=1" evidence="3">
    <location>
        <begin position="33"/>
        <end position="60"/>
    </location>
</feature>
<feature type="topological domain" description="Cytoplasmic" evidence="3">
    <location>
        <begin position="61"/>
        <end position="70"/>
    </location>
</feature>
<feature type="transmembrane region" description="Helical; Name=2" evidence="3">
    <location>
        <begin position="71"/>
        <end position="91"/>
    </location>
</feature>
<feature type="topological domain" description="Extracellular" evidence="3">
    <location>
        <begin position="92"/>
        <end position="104"/>
    </location>
</feature>
<feature type="transmembrane region" description="Helical; Name=3" evidence="3">
    <location>
        <begin position="105"/>
        <end position="126"/>
    </location>
</feature>
<feature type="topological domain" description="Cytoplasmic" evidence="3">
    <location>
        <begin position="127"/>
        <end position="143"/>
    </location>
</feature>
<feature type="transmembrane region" description="Helical; Name=4" evidence="3">
    <location>
        <begin position="144"/>
        <end position="168"/>
    </location>
</feature>
<feature type="topological domain" description="Extracellular" evidence="3">
    <location>
        <begin position="169"/>
        <end position="196"/>
    </location>
</feature>
<feature type="transmembrane region" description="Helical; Name=5" evidence="3">
    <location>
        <begin position="197"/>
        <end position="216"/>
    </location>
</feature>
<feature type="topological domain" description="Cytoplasmic" evidence="3">
    <location>
        <begin position="217"/>
        <end position="232"/>
    </location>
</feature>
<feature type="transmembrane region" description="Helical; Name=6" evidence="3">
    <location>
        <begin position="233"/>
        <end position="257"/>
    </location>
</feature>
<feature type="topological domain" description="Extracellular" evidence="3">
    <location>
        <begin position="258"/>
        <end position="274"/>
    </location>
</feature>
<feature type="transmembrane region" description="Helical; Name=7" evidence="3">
    <location>
        <begin position="275"/>
        <end position="298"/>
    </location>
</feature>
<feature type="topological domain" description="Cytoplasmic" evidence="3">
    <location>
        <begin position="299"/>
        <end position="354"/>
    </location>
</feature>
<feature type="modified residue" description="Phosphothreonine" evidence="2">
    <location>
        <position position="345"/>
    </location>
</feature>
<feature type="disulfide bond" evidence="4">
    <location>
        <begin position="103"/>
        <end position="176"/>
    </location>
</feature>
<protein>
    <recommendedName>
        <fullName evidence="1">CX3C chemokine receptor 1</fullName>
        <shortName evidence="1">C-X3-C CKR-1</shortName>
        <shortName evidence="1">CX3CR1</shortName>
    </recommendedName>
    <alternativeName>
        <fullName evidence="1">Fractalkine receptor</fullName>
    </alternativeName>
</protein>
<dbReference type="EMBL" id="U04808">
    <property type="protein sequence ID" value="AAB87093.1"/>
    <property type="molecule type" value="mRNA"/>
</dbReference>
<dbReference type="PIR" id="I58186">
    <property type="entry name" value="I58186"/>
</dbReference>
<dbReference type="RefSeq" id="NP_598218.1">
    <property type="nucleotide sequence ID" value="NM_133534.2"/>
</dbReference>
<dbReference type="RefSeq" id="XP_063120882.1">
    <property type="nucleotide sequence ID" value="XM_063264812.1"/>
</dbReference>
<dbReference type="SMR" id="P35411"/>
<dbReference type="FunCoup" id="P35411">
    <property type="interactions" value="54"/>
</dbReference>
<dbReference type="STRING" id="10116.ENSRNOP00000025019"/>
<dbReference type="ChEMBL" id="CHEMBL2346491"/>
<dbReference type="PhosphoSitePlus" id="P35411"/>
<dbReference type="PaxDb" id="10116-ENSRNOP00000025019"/>
<dbReference type="Ensembl" id="ENSRNOT00000025019.3">
    <property type="protein sequence ID" value="ENSRNOP00000025019.1"/>
    <property type="gene ID" value="ENSRNOG00000018509.3"/>
</dbReference>
<dbReference type="Ensembl" id="ENSRNOT00000093935.1">
    <property type="protein sequence ID" value="ENSRNOP00000097085.1"/>
    <property type="gene ID" value="ENSRNOG00000018509.3"/>
</dbReference>
<dbReference type="GeneID" id="171056"/>
<dbReference type="KEGG" id="rno:171056"/>
<dbReference type="UCSC" id="RGD:620137">
    <property type="organism name" value="rat"/>
</dbReference>
<dbReference type="AGR" id="RGD:620137"/>
<dbReference type="CTD" id="1524"/>
<dbReference type="RGD" id="620137">
    <property type="gene designation" value="Cx3cr1"/>
</dbReference>
<dbReference type="eggNOG" id="ENOG502QVQK">
    <property type="taxonomic scope" value="Eukaryota"/>
</dbReference>
<dbReference type="GeneTree" id="ENSGT01020000230359"/>
<dbReference type="HOGENOM" id="CLU_009579_8_3_1"/>
<dbReference type="InParanoid" id="P35411"/>
<dbReference type="OMA" id="TDIQEFG"/>
<dbReference type="OrthoDB" id="5981253at2759"/>
<dbReference type="PhylomeDB" id="P35411"/>
<dbReference type="TreeFam" id="TF330966"/>
<dbReference type="Reactome" id="R-RNO-380108">
    <property type="pathway name" value="Chemokine receptors bind chemokines"/>
</dbReference>
<dbReference type="Reactome" id="R-RNO-418594">
    <property type="pathway name" value="G alpha (i) signalling events"/>
</dbReference>
<dbReference type="PRO" id="PR:P35411"/>
<dbReference type="Proteomes" id="UP000002494">
    <property type="component" value="Chromosome 8"/>
</dbReference>
<dbReference type="Bgee" id="ENSRNOG00000018509">
    <property type="expression patterns" value="Expressed in frontal cortex and 16 other cell types or tissues"/>
</dbReference>
<dbReference type="GO" id="GO:0009986">
    <property type="term" value="C:cell surface"/>
    <property type="evidence" value="ECO:0000314"/>
    <property type="project" value="ARUK-UCL"/>
</dbReference>
<dbReference type="GO" id="GO:0097447">
    <property type="term" value="C:dendritic tree"/>
    <property type="evidence" value="ECO:0000314"/>
    <property type="project" value="ARUK-UCL"/>
</dbReference>
<dbReference type="GO" id="GO:0009897">
    <property type="term" value="C:external side of plasma membrane"/>
    <property type="evidence" value="ECO:0000318"/>
    <property type="project" value="GO_Central"/>
</dbReference>
<dbReference type="GO" id="GO:0032809">
    <property type="term" value="C:neuronal cell body membrane"/>
    <property type="evidence" value="ECO:0000314"/>
    <property type="project" value="ARUK-UCL"/>
</dbReference>
<dbReference type="GO" id="GO:0048471">
    <property type="term" value="C:perinuclear region of cytoplasm"/>
    <property type="evidence" value="ECO:0000314"/>
    <property type="project" value="ARUK-UCL"/>
</dbReference>
<dbReference type="GO" id="GO:0005886">
    <property type="term" value="C:plasma membrane"/>
    <property type="evidence" value="ECO:0000266"/>
    <property type="project" value="RGD"/>
</dbReference>
<dbReference type="GO" id="GO:0019957">
    <property type="term" value="F:C-C chemokine binding"/>
    <property type="evidence" value="ECO:0000318"/>
    <property type="project" value="GO_Central"/>
</dbReference>
<dbReference type="GO" id="GO:0016493">
    <property type="term" value="F:C-C chemokine receptor activity"/>
    <property type="evidence" value="ECO:0000318"/>
    <property type="project" value="GO_Central"/>
</dbReference>
<dbReference type="GO" id="GO:0019960">
    <property type="term" value="F:C-X3-C chemokine binding"/>
    <property type="evidence" value="ECO:0000250"/>
    <property type="project" value="UniProtKB"/>
</dbReference>
<dbReference type="GO" id="GO:0016495">
    <property type="term" value="F:C-X3-C chemokine receptor activity"/>
    <property type="evidence" value="ECO:0000314"/>
    <property type="project" value="RGD"/>
</dbReference>
<dbReference type="GO" id="GO:0004950">
    <property type="term" value="F:chemokine receptor activity"/>
    <property type="evidence" value="ECO:0000315"/>
    <property type="project" value="ARUK-UCL"/>
</dbReference>
<dbReference type="GO" id="GO:0031737">
    <property type="term" value="F:CX3C chemokine receptor binding"/>
    <property type="evidence" value="ECO:0000266"/>
    <property type="project" value="RGD"/>
</dbReference>
<dbReference type="GO" id="GO:0004896">
    <property type="term" value="F:cytokine receptor activity"/>
    <property type="evidence" value="ECO:0000266"/>
    <property type="project" value="RGD"/>
</dbReference>
<dbReference type="GO" id="GO:0004930">
    <property type="term" value="F:G protein-coupled receptor activity"/>
    <property type="evidence" value="ECO:0000266"/>
    <property type="project" value="RGD"/>
</dbReference>
<dbReference type="GO" id="GO:0002250">
    <property type="term" value="P:adaptive immune response"/>
    <property type="evidence" value="ECO:0000250"/>
    <property type="project" value="UniProtKB"/>
</dbReference>
<dbReference type="GO" id="GO:0061760">
    <property type="term" value="P:antifungal innate immune response"/>
    <property type="evidence" value="ECO:0000250"/>
    <property type="project" value="UniProtKB"/>
</dbReference>
<dbReference type="GO" id="GO:0035425">
    <property type="term" value="P:autocrine signaling"/>
    <property type="evidence" value="ECO:0000316"/>
    <property type="project" value="ARUK-UCL"/>
</dbReference>
<dbReference type="GO" id="GO:0007420">
    <property type="term" value="P:brain development"/>
    <property type="evidence" value="ECO:0000250"/>
    <property type="project" value="UniProtKB"/>
</dbReference>
<dbReference type="GO" id="GO:0019722">
    <property type="term" value="P:calcium-mediated signaling"/>
    <property type="evidence" value="ECO:0000318"/>
    <property type="project" value="GO_Central"/>
</dbReference>
<dbReference type="GO" id="GO:0007155">
    <property type="term" value="P:cell adhesion"/>
    <property type="evidence" value="ECO:0000266"/>
    <property type="project" value="RGD"/>
</dbReference>
<dbReference type="GO" id="GO:0060326">
    <property type="term" value="P:cell chemotaxis"/>
    <property type="evidence" value="ECO:0000315"/>
    <property type="project" value="ARUK-UCL"/>
</dbReference>
<dbReference type="GO" id="GO:0098609">
    <property type="term" value="P:cell-cell adhesion"/>
    <property type="evidence" value="ECO:0000315"/>
    <property type="project" value="ARUK-UCL"/>
</dbReference>
<dbReference type="GO" id="GO:0071222">
    <property type="term" value="P:cellular response to lipopolysaccharide"/>
    <property type="evidence" value="ECO:0000270"/>
    <property type="project" value="RGD"/>
</dbReference>
<dbReference type="GO" id="GO:0071560">
    <property type="term" value="P:cellular response to transforming growth factor beta stimulus"/>
    <property type="evidence" value="ECO:0000270"/>
    <property type="project" value="RGD"/>
</dbReference>
<dbReference type="GO" id="GO:0071356">
    <property type="term" value="P:cellular response to tumor necrosis factor"/>
    <property type="evidence" value="ECO:0000315"/>
    <property type="project" value="ARUK-UCL"/>
</dbReference>
<dbReference type="GO" id="GO:0021626">
    <property type="term" value="P:central nervous system maturation"/>
    <property type="evidence" value="ECO:0000266"/>
    <property type="project" value="RGD"/>
</dbReference>
<dbReference type="GO" id="GO:0070098">
    <property type="term" value="P:chemokine-mediated signaling pathway"/>
    <property type="evidence" value="ECO:0000315"/>
    <property type="project" value="ARUK-UCL"/>
</dbReference>
<dbReference type="GO" id="GO:0006935">
    <property type="term" value="P:chemotaxis"/>
    <property type="evidence" value="ECO:0000266"/>
    <property type="project" value="RGD"/>
</dbReference>
<dbReference type="GO" id="GO:0007186">
    <property type="term" value="P:G protein-coupled receptor signaling pathway"/>
    <property type="evidence" value="ECO:0000315"/>
    <property type="project" value="ARUK-UCL"/>
</dbReference>
<dbReference type="GO" id="GO:0048874">
    <property type="term" value="P:host-mediated regulation of intestinal microbiota composition"/>
    <property type="evidence" value="ECO:0000250"/>
    <property type="project" value="UniProtKB"/>
</dbReference>
<dbReference type="GO" id="GO:0006955">
    <property type="term" value="P:immune response"/>
    <property type="evidence" value="ECO:0000250"/>
    <property type="project" value="UniProtKB"/>
</dbReference>
<dbReference type="GO" id="GO:0030595">
    <property type="term" value="P:leukocyte chemotaxis"/>
    <property type="evidence" value="ECO:0000250"/>
    <property type="project" value="UniProtKB"/>
</dbReference>
<dbReference type="GO" id="GO:0050901">
    <property type="term" value="P:leukocyte tethering or rolling"/>
    <property type="evidence" value="ECO:0000266"/>
    <property type="project" value="RGD"/>
</dbReference>
<dbReference type="GO" id="GO:0007613">
    <property type="term" value="P:memory"/>
    <property type="evidence" value="ECO:0000315"/>
    <property type="project" value="RGD"/>
</dbReference>
<dbReference type="GO" id="GO:0002282">
    <property type="term" value="P:microglial cell activation involved in immune response"/>
    <property type="evidence" value="ECO:0000250"/>
    <property type="project" value="UniProtKB"/>
</dbReference>
<dbReference type="GO" id="GO:0050804">
    <property type="term" value="P:modulation of chemical synaptic transmission"/>
    <property type="evidence" value="ECO:0000266"/>
    <property type="project" value="RGD"/>
</dbReference>
<dbReference type="GO" id="GO:0150090">
    <property type="term" value="P:multiple spine synapse organization, single dendrite"/>
    <property type="evidence" value="ECO:0000266"/>
    <property type="project" value="RGD"/>
</dbReference>
<dbReference type="GO" id="GO:2001234">
    <property type="term" value="P:negative regulation of apoptotic signaling pathway"/>
    <property type="evidence" value="ECO:0000316"/>
    <property type="project" value="ARUK-UCL"/>
</dbReference>
<dbReference type="GO" id="GO:0030336">
    <property type="term" value="P:negative regulation of cell migration"/>
    <property type="evidence" value="ECO:0000315"/>
    <property type="project" value="RGD"/>
</dbReference>
<dbReference type="GO" id="GO:0110091">
    <property type="term" value="P:negative regulation of hippocampal neuron apoptotic process"/>
    <property type="evidence" value="ECO:0000316"/>
    <property type="project" value="ARUK-UCL"/>
</dbReference>
<dbReference type="GO" id="GO:0032691">
    <property type="term" value="P:negative regulation of interleukin-1 beta production"/>
    <property type="evidence" value="ECO:0000315"/>
    <property type="project" value="ARUK-UCL"/>
</dbReference>
<dbReference type="GO" id="GO:1900272">
    <property type="term" value="P:negative regulation of long-term synaptic potentiation"/>
    <property type="evidence" value="ECO:0000315"/>
    <property type="project" value="RGD"/>
</dbReference>
<dbReference type="GO" id="GO:1904150">
    <property type="term" value="P:negative regulation of microglial cell mediated cytotoxicity"/>
    <property type="evidence" value="ECO:0000250"/>
    <property type="project" value="UniProtKB"/>
</dbReference>
<dbReference type="GO" id="GO:0007200">
    <property type="term" value="P:phospholipase C-activating G protein-coupled receptor signaling pathway"/>
    <property type="evidence" value="ECO:0000266"/>
    <property type="project" value="RGD"/>
</dbReference>
<dbReference type="GO" id="GO:0045766">
    <property type="term" value="P:positive regulation of angiogenesis"/>
    <property type="evidence" value="ECO:0000315"/>
    <property type="project" value="RGD"/>
</dbReference>
<dbReference type="GO" id="GO:0043123">
    <property type="term" value="P:positive regulation of canonical NF-kappaB signal transduction"/>
    <property type="evidence" value="ECO:0000316"/>
    <property type="project" value="ARUK-UCL"/>
</dbReference>
<dbReference type="GO" id="GO:0007204">
    <property type="term" value="P:positive regulation of cytosolic calcium ion concentration"/>
    <property type="evidence" value="ECO:0000318"/>
    <property type="project" value="GO_Central"/>
</dbReference>
<dbReference type="GO" id="GO:1904141">
    <property type="term" value="P:positive regulation of microglial cell migration"/>
    <property type="evidence" value="ECO:0000315"/>
    <property type="project" value="ARUK-UCL"/>
</dbReference>
<dbReference type="GO" id="GO:0090026">
    <property type="term" value="P:positive regulation of monocyte chemotaxis"/>
    <property type="evidence" value="ECO:0000266"/>
    <property type="project" value="RGD"/>
</dbReference>
<dbReference type="GO" id="GO:0002052">
    <property type="term" value="P:positive regulation of neuroblast proliferation"/>
    <property type="evidence" value="ECO:0000315"/>
    <property type="project" value="RGD"/>
</dbReference>
<dbReference type="GO" id="GO:0050769">
    <property type="term" value="P:positive regulation of neurogenesis"/>
    <property type="evidence" value="ECO:0000266"/>
    <property type="project" value="RGD"/>
</dbReference>
<dbReference type="GO" id="GO:0051897">
    <property type="term" value="P:positive regulation of phosphatidylinositol 3-kinase/protein kinase B signal transduction"/>
    <property type="evidence" value="ECO:0000316"/>
    <property type="project" value="ARUK-UCL"/>
</dbReference>
<dbReference type="GO" id="GO:0045428">
    <property type="term" value="P:regulation of nitric oxide biosynthetic process"/>
    <property type="evidence" value="ECO:0000266"/>
    <property type="project" value="RGD"/>
</dbReference>
<dbReference type="GO" id="GO:0032680">
    <property type="term" value="P:regulation of tumor necrosis factor production"/>
    <property type="evidence" value="ECO:0000266"/>
    <property type="project" value="RGD"/>
</dbReference>
<dbReference type="GO" id="GO:0002931">
    <property type="term" value="P:response to ischemia"/>
    <property type="evidence" value="ECO:0000316"/>
    <property type="project" value="ARUK-UCL"/>
</dbReference>
<dbReference type="GO" id="GO:0035176">
    <property type="term" value="P:social behavior"/>
    <property type="evidence" value="ECO:0000266"/>
    <property type="project" value="RGD"/>
</dbReference>
<dbReference type="GO" id="GO:0060074">
    <property type="term" value="P:synapse maturation"/>
    <property type="evidence" value="ECO:0000266"/>
    <property type="project" value="RGD"/>
</dbReference>
<dbReference type="GO" id="GO:0098883">
    <property type="term" value="P:synapse pruning"/>
    <property type="evidence" value="ECO:0000250"/>
    <property type="project" value="UniProtKB"/>
</dbReference>
<dbReference type="CDD" id="cd15186">
    <property type="entry name" value="7tmA_CX3CR1"/>
    <property type="match status" value="1"/>
</dbReference>
<dbReference type="FunFam" id="1.20.1070.10:FF:000026">
    <property type="entry name" value="C-C chemokine receptor type 5"/>
    <property type="match status" value="1"/>
</dbReference>
<dbReference type="Gene3D" id="1.20.1070.10">
    <property type="entry name" value="Rhodopsin 7-helix transmembrane proteins"/>
    <property type="match status" value="1"/>
</dbReference>
<dbReference type="InterPro" id="IPR050119">
    <property type="entry name" value="CCR1-9-like"/>
</dbReference>
<dbReference type="InterPro" id="IPR005387">
    <property type="entry name" value="Chemokine_CX3CR1"/>
</dbReference>
<dbReference type="InterPro" id="IPR000276">
    <property type="entry name" value="GPCR_Rhodpsn"/>
</dbReference>
<dbReference type="InterPro" id="IPR017452">
    <property type="entry name" value="GPCR_Rhodpsn_7TM"/>
</dbReference>
<dbReference type="PANTHER" id="PTHR10489">
    <property type="entry name" value="CELL ADHESION MOLECULE"/>
    <property type="match status" value="1"/>
</dbReference>
<dbReference type="PANTHER" id="PTHR10489:SF955">
    <property type="entry name" value="CX3C CHEMOKINE RECEPTOR 1"/>
    <property type="match status" value="1"/>
</dbReference>
<dbReference type="Pfam" id="PF00001">
    <property type="entry name" value="7tm_1"/>
    <property type="match status" value="1"/>
</dbReference>
<dbReference type="PRINTS" id="PR01562">
    <property type="entry name" value="FRACTALKINER"/>
</dbReference>
<dbReference type="PRINTS" id="PR00237">
    <property type="entry name" value="GPCRRHODOPSN"/>
</dbReference>
<dbReference type="SUPFAM" id="SSF81321">
    <property type="entry name" value="Family A G protein-coupled receptor-like"/>
    <property type="match status" value="1"/>
</dbReference>
<dbReference type="PROSITE" id="PS00237">
    <property type="entry name" value="G_PROTEIN_RECEP_F1_1"/>
    <property type="match status" value="1"/>
</dbReference>
<dbReference type="PROSITE" id="PS50262">
    <property type="entry name" value="G_PROTEIN_RECEP_F1_2"/>
    <property type="match status" value="1"/>
</dbReference>
<organism>
    <name type="scientific">Rattus norvegicus</name>
    <name type="common">Rat</name>
    <dbReference type="NCBI Taxonomy" id="10116"/>
    <lineage>
        <taxon>Eukaryota</taxon>
        <taxon>Metazoa</taxon>
        <taxon>Chordata</taxon>
        <taxon>Craniata</taxon>
        <taxon>Vertebrata</taxon>
        <taxon>Euteleostomi</taxon>
        <taxon>Mammalia</taxon>
        <taxon>Eutheria</taxon>
        <taxon>Euarchontoglires</taxon>
        <taxon>Glires</taxon>
        <taxon>Rodentia</taxon>
        <taxon>Myomorpha</taxon>
        <taxon>Muroidea</taxon>
        <taxon>Muridae</taxon>
        <taxon>Murinae</taxon>
        <taxon>Rattus</taxon>
    </lineage>
</organism>